<keyword id="KW-0175">Coiled coil</keyword>
<keyword id="KW-0433">Leucine-rich repeat</keyword>
<keyword id="KW-1185">Reference proteome</keyword>
<keyword id="KW-0677">Repeat</keyword>
<gene>
    <name type="primary">PIRL3</name>
    <name type="ordered locus">At1g12970</name>
    <name type="ORF">F13K23.23</name>
</gene>
<sequence length="464" mass="51648">MDHDLEIFPLLSYVLHHSDPASHAPPSLAIQQSLANRYPLLTNPYVISSLIESIPSTITQTLFVFGSLGPRPDPLAVSSARSKIREIKENDSLSPEDAAKEEQVYAAVVSLEEVHEGYEKQLRDLEEEIGRVYASAVESLSGGDEVNEEVLAVIKDAEDGGVVERIDLSDHELKLLPDALGKIVGLVSLNVSRNNLRFLPDTISGLEKLEELDLSSNRLVFLPDSIGLLLNLRILNVTGNKLTLLPESIAQCRSLVELDASFNNLTSLPANFGYGLLNLERLSIQLNKIRFFPNSICEMRSLRYLDAHMNEIHGLPIAIGRLTNLEVMNLSSNFSDLIELPDTISDLANLRELDLSNNQIRVLPDSFFRLEKLEKLNLDQNPLEYPPQEMVNQSAEAVREFMRKRWEEMVEEEQLRSVIEAEKQQGGATGWLSWGSSIVTSLFSGGTHGGAAKKPKNSFLDEQL</sequence>
<protein>
    <recommendedName>
        <fullName>Plant intracellular Ras-group-related LRR protein 3</fullName>
    </recommendedName>
</protein>
<reference key="1">
    <citation type="journal article" date="2005" name="Plant Cell Physiol.">
        <title>PIRLs: a novel class of plant intracellular leucine-rich repeat proteins.</title>
        <authorList>
            <person name="Forsthoefel N.R."/>
            <person name="Cutler K."/>
            <person name="Port M.D."/>
            <person name="Yamamoto T."/>
            <person name="Vernon D.M."/>
        </authorList>
    </citation>
    <scope>NUCLEOTIDE SEQUENCE [MRNA]</scope>
    <scope>GENE FAMILY</scope>
    <scope>MOTIF GVYW</scope>
    <scope>TISSUE SPECIFICITY</scope>
</reference>
<reference key="2">
    <citation type="journal article" date="2000" name="Nature">
        <title>Sequence and analysis of chromosome 1 of the plant Arabidopsis thaliana.</title>
        <authorList>
            <person name="Theologis A."/>
            <person name="Ecker J.R."/>
            <person name="Palm C.J."/>
            <person name="Federspiel N.A."/>
            <person name="Kaul S."/>
            <person name="White O."/>
            <person name="Alonso J."/>
            <person name="Altafi H."/>
            <person name="Araujo R."/>
            <person name="Bowman C.L."/>
            <person name="Brooks S.Y."/>
            <person name="Buehler E."/>
            <person name="Chan A."/>
            <person name="Chao Q."/>
            <person name="Chen H."/>
            <person name="Cheuk R.F."/>
            <person name="Chin C.W."/>
            <person name="Chung M.K."/>
            <person name="Conn L."/>
            <person name="Conway A.B."/>
            <person name="Conway A.R."/>
            <person name="Creasy T.H."/>
            <person name="Dewar K."/>
            <person name="Dunn P."/>
            <person name="Etgu P."/>
            <person name="Feldblyum T.V."/>
            <person name="Feng J.-D."/>
            <person name="Fong B."/>
            <person name="Fujii C.Y."/>
            <person name="Gill J.E."/>
            <person name="Goldsmith A.D."/>
            <person name="Haas B."/>
            <person name="Hansen N.F."/>
            <person name="Hughes B."/>
            <person name="Huizar L."/>
            <person name="Hunter J.L."/>
            <person name="Jenkins J."/>
            <person name="Johnson-Hopson C."/>
            <person name="Khan S."/>
            <person name="Khaykin E."/>
            <person name="Kim C.J."/>
            <person name="Koo H.L."/>
            <person name="Kremenetskaia I."/>
            <person name="Kurtz D.B."/>
            <person name="Kwan A."/>
            <person name="Lam B."/>
            <person name="Langin-Hooper S."/>
            <person name="Lee A."/>
            <person name="Lee J.M."/>
            <person name="Lenz C.A."/>
            <person name="Li J.H."/>
            <person name="Li Y.-P."/>
            <person name="Lin X."/>
            <person name="Liu S.X."/>
            <person name="Liu Z.A."/>
            <person name="Luros J.S."/>
            <person name="Maiti R."/>
            <person name="Marziali A."/>
            <person name="Militscher J."/>
            <person name="Miranda M."/>
            <person name="Nguyen M."/>
            <person name="Nierman W.C."/>
            <person name="Osborne B.I."/>
            <person name="Pai G."/>
            <person name="Peterson J."/>
            <person name="Pham P.K."/>
            <person name="Rizzo M."/>
            <person name="Rooney T."/>
            <person name="Rowley D."/>
            <person name="Sakano H."/>
            <person name="Salzberg S.L."/>
            <person name="Schwartz J.R."/>
            <person name="Shinn P."/>
            <person name="Southwick A.M."/>
            <person name="Sun H."/>
            <person name="Tallon L.J."/>
            <person name="Tambunga G."/>
            <person name="Toriumi M.J."/>
            <person name="Town C.D."/>
            <person name="Utterback T."/>
            <person name="Van Aken S."/>
            <person name="Vaysberg M."/>
            <person name="Vysotskaia V.S."/>
            <person name="Walker M."/>
            <person name="Wu D."/>
            <person name="Yu G."/>
            <person name="Fraser C.M."/>
            <person name="Venter J.C."/>
            <person name="Davis R.W."/>
        </authorList>
    </citation>
    <scope>NUCLEOTIDE SEQUENCE [LARGE SCALE GENOMIC DNA]</scope>
    <source>
        <strain>cv. Columbia</strain>
    </source>
</reference>
<reference key="3">
    <citation type="journal article" date="2017" name="Plant J.">
        <title>Araport11: a complete reannotation of the Arabidopsis thaliana reference genome.</title>
        <authorList>
            <person name="Cheng C.Y."/>
            <person name="Krishnakumar V."/>
            <person name="Chan A.P."/>
            <person name="Thibaud-Nissen F."/>
            <person name="Schobel S."/>
            <person name="Town C.D."/>
        </authorList>
    </citation>
    <scope>GENOME REANNOTATION</scope>
    <source>
        <strain>cv. Columbia</strain>
    </source>
</reference>
<reference key="4">
    <citation type="journal article" date="2003" name="Science">
        <title>Empirical analysis of transcriptional activity in the Arabidopsis genome.</title>
        <authorList>
            <person name="Yamada K."/>
            <person name="Lim J."/>
            <person name="Dale J.M."/>
            <person name="Chen H."/>
            <person name="Shinn P."/>
            <person name="Palm C.J."/>
            <person name="Southwick A.M."/>
            <person name="Wu H.C."/>
            <person name="Kim C.J."/>
            <person name="Nguyen M."/>
            <person name="Pham P.K."/>
            <person name="Cheuk R.F."/>
            <person name="Karlin-Newmann G."/>
            <person name="Liu S.X."/>
            <person name="Lam B."/>
            <person name="Sakano H."/>
            <person name="Wu T."/>
            <person name="Yu G."/>
            <person name="Miranda M."/>
            <person name="Quach H.L."/>
            <person name="Tripp M."/>
            <person name="Chang C.H."/>
            <person name="Lee J.M."/>
            <person name="Toriumi M.J."/>
            <person name="Chan M.M."/>
            <person name="Tang C.C."/>
            <person name="Onodera C.S."/>
            <person name="Deng J.M."/>
            <person name="Akiyama K."/>
            <person name="Ansari Y."/>
            <person name="Arakawa T."/>
            <person name="Banh J."/>
            <person name="Banno F."/>
            <person name="Bowser L."/>
            <person name="Brooks S.Y."/>
            <person name="Carninci P."/>
            <person name="Chao Q."/>
            <person name="Choy N."/>
            <person name="Enju A."/>
            <person name="Goldsmith A.D."/>
            <person name="Gurjal M."/>
            <person name="Hansen N.F."/>
            <person name="Hayashizaki Y."/>
            <person name="Johnson-Hopson C."/>
            <person name="Hsuan V.W."/>
            <person name="Iida K."/>
            <person name="Karnes M."/>
            <person name="Khan S."/>
            <person name="Koesema E."/>
            <person name="Ishida J."/>
            <person name="Jiang P.X."/>
            <person name="Jones T."/>
            <person name="Kawai J."/>
            <person name="Kamiya A."/>
            <person name="Meyers C."/>
            <person name="Nakajima M."/>
            <person name="Narusaka M."/>
            <person name="Seki M."/>
            <person name="Sakurai T."/>
            <person name="Satou M."/>
            <person name="Tamse R."/>
            <person name="Vaysberg M."/>
            <person name="Wallender E.K."/>
            <person name="Wong C."/>
            <person name="Yamamura Y."/>
            <person name="Yuan S."/>
            <person name="Shinozaki K."/>
            <person name="Davis R.W."/>
            <person name="Theologis A."/>
            <person name="Ecker J.R."/>
        </authorList>
    </citation>
    <scope>NUCLEOTIDE SEQUENCE [LARGE SCALE MRNA]</scope>
    <source>
        <strain>cv. Columbia</strain>
    </source>
</reference>
<organism>
    <name type="scientific">Arabidopsis thaliana</name>
    <name type="common">Mouse-ear cress</name>
    <dbReference type="NCBI Taxonomy" id="3702"/>
    <lineage>
        <taxon>Eukaryota</taxon>
        <taxon>Viridiplantae</taxon>
        <taxon>Streptophyta</taxon>
        <taxon>Embryophyta</taxon>
        <taxon>Tracheophyta</taxon>
        <taxon>Spermatophyta</taxon>
        <taxon>Magnoliopsida</taxon>
        <taxon>eudicotyledons</taxon>
        <taxon>Gunneridae</taxon>
        <taxon>Pentapetalae</taxon>
        <taxon>rosids</taxon>
        <taxon>malvids</taxon>
        <taxon>Brassicales</taxon>
        <taxon>Brassicaceae</taxon>
        <taxon>Camelineae</taxon>
        <taxon>Arabidopsis</taxon>
    </lineage>
</organism>
<comment type="function">
    <text evidence="1">Leucine-rich repeat protein that likely mediates protein interactions, possibly in the context of signal transduction.</text>
</comment>
<comment type="tissue specificity">
    <text evidence="3">Widely expressed.</text>
</comment>
<comment type="similarity">
    <text evidence="4">Belongs to the SHOC2 family.</text>
</comment>
<comment type="sequence caution" evidence="4">
    <conflict type="erroneous gene model prediction">
        <sequence resource="EMBL-CDS" id="AAF78502"/>
    </conflict>
</comment>
<accession>Q8W4Q3</accession>
<accession>Q9LPV2</accession>
<evidence type="ECO:0000250" key="1"/>
<evidence type="ECO:0000255" key="2"/>
<evidence type="ECO:0000269" key="3">
    <source>
    </source>
</evidence>
<evidence type="ECO:0000305" key="4"/>
<feature type="chain" id="PRO_0000423603" description="Plant intracellular Ras-group-related LRR protein 3">
    <location>
        <begin position="1"/>
        <end position="464"/>
    </location>
</feature>
<feature type="repeat" description="LRR 1">
    <location>
        <begin position="160"/>
        <end position="183"/>
    </location>
</feature>
<feature type="repeat" description="LRR 2">
    <location>
        <begin position="184"/>
        <end position="206"/>
    </location>
</feature>
<feature type="repeat" description="LRR 3">
    <location>
        <begin position="207"/>
        <end position="230"/>
    </location>
</feature>
<feature type="repeat" description="LRR 4">
    <location>
        <begin position="232"/>
        <end position="252"/>
    </location>
</feature>
<feature type="repeat" description="LRR 5">
    <location>
        <begin position="254"/>
        <end position="275"/>
    </location>
</feature>
<feature type="repeat" description="LRR 6">
    <location>
        <begin position="276"/>
        <end position="299"/>
    </location>
</feature>
<feature type="repeat" description="LRR 7">
    <location>
        <begin position="301"/>
        <end position="322"/>
    </location>
</feature>
<feature type="repeat" description="LRR 8">
    <location>
        <begin position="323"/>
        <end position="347"/>
    </location>
</feature>
<feature type="repeat" description="LRR 9">
    <location>
        <begin position="348"/>
        <end position="370"/>
    </location>
</feature>
<feature type="repeat" description="LRR 10">
    <location>
        <begin position="372"/>
        <end position="393"/>
    </location>
</feature>
<feature type="coiled-coil region" evidence="2">
    <location>
        <begin position="106"/>
        <end position="138"/>
    </location>
</feature>
<feature type="short sequence motif" description="GVYW; degenerate">
    <location>
        <begin position="398"/>
        <end position="406"/>
    </location>
</feature>
<name>PIRL3_ARATH</name>
<dbReference type="EMBL" id="AY849573">
    <property type="protein sequence ID" value="AAW57412.1"/>
    <property type="molecule type" value="mRNA"/>
</dbReference>
<dbReference type="EMBL" id="AC012187">
    <property type="protein sequence ID" value="AAF78502.1"/>
    <property type="status" value="ALT_SEQ"/>
    <property type="molecule type" value="Genomic_DNA"/>
</dbReference>
<dbReference type="EMBL" id="CP002684">
    <property type="protein sequence ID" value="AEE28955.1"/>
    <property type="molecule type" value="Genomic_DNA"/>
</dbReference>
<dbReference type="EMBL" id="AY062103">
    <property type="protein sequence ID" value="AAL32979.1"/>
    <property type="molecule type" value="mRNA"/>
</dbReference>
<dbReference type="EMBL" id="AY124880">
    <property type="protein sequence ID" value="AAM70589.1"/>
    <property type="molecule type" value="mRNA"/>
</dbReference>
<dbReference type="PIR" id="F86263">
    <property type="entry name" value="F86263"/>
</dbReference>
<dbReference type="RefSeq" id="NP_563921.1">
    <property type="nucleotide sequence ID" value="NM_101168.2"/>
</dbReference>
<dbReference type="SMR" id="Q8W4Q3"/>
<dbReference type="FunCoup" id="Q8W4Q3">
    <property type="interactions" value="55"/>
</dbReference>
<dbReference type="STRING" id="3702.Q8W4Q3"/>
<dbReference type="iPTMnet" id="Q8W4Q3"/>
<dbReference type="PaxDb" id="3702-AT1G12970.1"/>
<dbReference type="ProteomicsDB" id="236742"/>
<dbReference type="EnsemblPlants" id="AT1G12970.1">
    <property type="protein sequence ID" value="AT1G12970.1"/>
    <property type="gene ID" value="AT1G12970"/>
</dbReference>
<dbReference type="GeneID" id="837855"/>
<dbReference type="Gramene" id="AT1G12970.1">
    <property type="protein sequence ID" value="AT1G12970.1"/>
    <property type="gene ID" value="AT1G12970"/>
</dbReference>
<dbReference type="KEGG" id="ath:AT1G12970"/>
<dbReference type="Araport" id="AT1G12970"/>
<dbReference type="TAIR" id="AT1G12970">
    <property type="gene designation" value="PIRL3"/>
</dbReference>
<dbReference type="eggNOG" id="KOG0619">
    <property type="taxonomic scope" value="Eukaryota"/>
</dbReference>
<dbReference type="HOGENOM" id="CLU_021557_0_0_1"/>
<dbReference type="InParanoid" id="Q8W4Q3"/>
<dbReference type="OMA" id="YFPNSIC"/>
<dbReference type="PhylomeDB" id="Q8W4Q3"/>
<dbReference type="PRO" id="PR:Q8W4Q3"/>
<dbReference type="Proteomes" id="UP000006548">
    <property type="component" value="Chromosome 1"/>
</dbReference>
<dbReference type="ExpressionAtlas" id="Q8W4Q3">
    <property type="expression patterns" value="baseline and differential"/>
</dbReference>
<dbReference type="GO" id="GO:0004674">
    <property type="term" value="F:protein serine/threonine kinase activity"/>
    <property type="evidence" value="ECO:0007005"/>
    <property type="project" value="TAIR"/>
</dbReference>
<dbReference type="GO" id="GO:0055046">
    <property type="term" value="P:microgametogenesis"/>
    <property type="evidence" value="ECO:0000316"/>
    <property type="project" value="TAIR"/>
</dbReference>
<dbReference type="GO" id="GO:0046777">
    <property type="term" value="P:protein autophosphorylation"/>
    <property type="evidence" value="ECO:0007005"/>
    <property type="project" value="TAIR"/>
</dbReference>
<dbReference type="FunFam" id="3.80.10.10:FF:000405">
    <property type="entry name" value="Plant intracellular Ras-group-related LRR protein 4"/>
    <property type="match status" value="1"/>
</dbReference>
<dbReference type="Gene3D" id="3.80.10.10">
    <property type="entry name" value="Ribonuclease Inhibitor"/>
    <property type="match status" value="1"/>
</dbReference>
<dbReference type="InterPro" id="IPR001611">
    <property type="entry name" value="Leu-rich_rpt"/>
</dbReference>
<dbReference type="InterPro" id="IPR003591">
    <property type="entry name" value="Leu-rich_rpt_typical-subtyp"/>
</dbReference>
<dbReference type="InterPro" id="IPR032675">
    <property type="entry name" value="LRR_dom_sf"/>
</dbReference>
<dbReference type="InterPro" id="IPR050216">
    <property type="entry name" value="LRR_domain-containing"/>
</dbReference>
<dbReference type="PANTHER" id="PTHR48051">
    <property type="match status" value="1"/>
</dbReference>
<dbReference type="PANTHER" id="PTHR48051:SF54">
    <property type="entry name" value="LEUCINE-RICH REPEAT-CONTAINING PROTEIN"/>
    <property type="match status" value="1"/>
</dbReference>
<dbReference type="Pfam" id="PF00560">
    <property type="entry name" value="LRR_1"/>
    <property type="match status" value="1"/>
</dbReference>
<dbReference type="Pfam" id="PF13855">
    <property type="entry name" value="LRR_8"/>
    <property type="match status" value="3"/>
</dbReference>
<dbReference type="PRINTS" id="PR00019">
    <property type="entry name" value="LEURICHRPT"/>
</dbReference>
<dbReference type="SMART" id="SM00364">
    <property type="entry name" value="LRR_BAC"/>
    <property type="match status" value="6"/>
</dbReference>
<dbReference type="SMART" id="SM00369">
    <property type="entry name" value="LRR_TYP"/>
    <property type="match status" value="7"/>
</dbReference>
<dbReference type="SUPFAM" id="SSF52058">
    <property type="entry name" value="L domain-like"/>
    <property type="match status" value="1"/>
</dbReference>
<dbReference type="PROSITE" id="PS51450">
    <property type="entry name" value="LRR"/>
    <property type="match status" value="9"/>
</dbReference>
<proteinExistence type="evidence at transcript level"/>